<dbReference type="EC" id="2.5.1.-" evidence="1"/>
<dbReference type="EMBL" id="AP006627">
    <property type="protein sequence ID" value="BAD65330.1"/>
    <property type="molecule type" value="Genomic_DNA"/>
</dbReference>
<dbReference type="RefSeq" id="WP_011247638.1">
    <property type="nucleotide sequence ID" value="NC_006582.1"/>
</dbReference>
<dbReference type="SMR" id="Q5WE80"/>
<dbReference type="STRING" id="66692.ABC2796"/>
<dbReference type="KEGG" id="bcl:ABC2796"/>
<dbReference type="eggNOG" id="COG0346">
    <property type="taxonomic scope" value="Bacteria"/>
</dbReference>
<dbReference type="HOGENOM" id="CLU_121356_0_0_9"/>
<dbReference type="OrthoDB" id="192739at2"/>
<dbReference type="Proteomes" id="UP000001168">
    <property type="component" value="Chromosome"/>
</dbReference>
<dbReference type="GO" id="GO:0005737">
    <property type="term" value="C:cytoplasm"/>
    <property type="evidence" value="ECO:0007669"/>
    <property type="project" value="UniProtKB-SubCell"/>
</dbReference>
<dbReference type="GO" id="GO:0000287">
    <property type="term" value="F:magnesium ion binding"/>
    <property type="evidence" value="ECO:0007669"/>
    <property type="project" value="UniProtKB-UniRule"/>
</dbReference>
<dbReference type="GO" id="GO:0016765">
    <property type="term" value="F:transferase activity, transferring alkyl or aryl (other than methyl) groups"/>
    <property type="evidence" value="ECO:0007669"/>
    <property type="project" value="UniProtKB-UniRule"/>
</dbReference>
<dbReference type="GO" id="GO:0046677">
    <property type="term" value="P:response to antibiotic"/>
    <property type="evidence" value="ECO:0007669"/>
    <property type="project" value="UniProtKB-UniRule"/>
</dbReference>
<dbReference type="CDD" id="cd08363">
    <property type="entry name" value="FosB"/>
    <property type="match status" value="1"/>
</dbReference>
<dbReference type="Gene3D" id="3.10.180.10">
    <property type="entry name" value="2,3-Dihydroxybiphenyl 1,2-Dioxygenase, domain 1"/>
    <property type="match status" value="1"/>
</dbReference>
<dbReference type="HAMAP" id="MF_01512">
    <property type="entry name" value="FosB"/>
    <property type="match status" value="1"/>
</dbReference>
<dbReference type="InterPro" id="IPR051332">
    <property type="entry name" value="Fosfomycin_Res_Enzymes"/>
</dbReference>
<dbReference type="InterPro" id="IPR029068">
    <property type="entry name" value="Glyas_Bleomycin-R_OHBP_Dase"/>
</dbReference>
<dbReference type="InterPro" id="IPR004360">
    <property type="entry name" value="Glyas_Fos-R_dOase_dom"/>
</dbReference>
<dbReference type="InterPro" id="IPR022858">
    <property type="entry name" value="Metallothiol_Trafse_FosB"/>
</dbReference>
<dbReference type="InterPro" id="IPR037523">
    <property type="entry name" value="VOC"/>
</dbReference>
<dbReference type="NCBIfam" id="NF003152">
    <property type="entry name" value="PRK04101.1"/>
    <property type="match status" value="1"/>
</dbReference>
<dbReference type="PANTHER" id="PTHR36113:SF6">
    <property type="entry name" value="FOSFOMYCIN RESISTANCE PROTEIN FOSX"/>
    <property type="match status" value="1"/>
</dbReference>
<dbReference type="PANTHER" id="PTHR36113">
    <property type="entry name" value="LYASE, PUTATIVE-RELATED-RELATED"/>
    <property type="match status" value="1"/>
</dbReference>
<dbReference type="Pfam" id="PF00903">
    <property type="entry name" value="Glyoxalase"/>
    <property type="match status" value="1"/>
</dbReference>
<dbReference type="SUPFAM" id="SSF54593">
    <property type="entry name" value="Glyoxalase/Bleomycin resistance protein/Dihydroxybiphenyl dioxygenase"/>
    <property type="match status" value="1"/>
</dbReference>
<dbReference type="PROSITE" id="PS51819">
    <property type="entry name" value="VOC"/>
    <property type="match status" value="1"/>
</dbReference>
<keyword id="KW-0046">Antibiotic resistance</keyword>
<keyword id="KW-0963">Cytoplasm</keyword>
<keyword id="KW-0460">Magnesium</keyword>
<keyword id="KW-0479">Metal-binding</keyword>
<keyword id="KW-1185">Reference proteome</keyword>
<keyword id="KW-0808">Transferase</keyword>
<proteinExistence type="inferred from homology"/>
<sequence length="146" mass="16647">MVNGINHMTFSVSNMDKAVSFYKHVFMEAPLVLGEKTAYFTIGGTWLALNLQPDIDRKEIRQSYTHIAFSIEESQLDAFYTRLLEAGADILPGRKRQVETEGKSIYFRDPDGHLLEVHTGTLAERLAHYEKTAPDMLVNIDEQNKK</sequence>
<accession>Q5WE80</accession>
<reference key="1">
    <citation type="submission" date="2003-10" db="EMBL/GenBank/DDBJ databases">
        <title>The complete genome sequence of the alkaliphilic Bacillus clausii KSM-K16.</title>
        <authorList>
            <person name="Takaki Y."/>
            <person name="Kageyama Y."/>
            <person name="Shimamura S."/>
            <person name="Suzuki H."/>
            <person name="Nishi S."/>
            <person name="Hatada Y."/>
            <person name="Kawai S."/>
            <person name="Ito S."/>
            <person name="Horikoshi K."/>
        </authorList>
    </citation>
    <scope>NUCLEOTIDE SEQUENCE [LARGE SCALE GENOMIC DNA]</scope>
    <source>
        <strain>KSM-K16</strain>
    </source>
</reference>
<comment type="function">
    <text evidence="1">Metallothiol transferase which confers resistance to fosfomycin by catalyzing the addition of a thiol cofactor to fosfomycin. L-cysteine is probably the physiological thiol donor.</text>
</comment>
<comment type="cofactor">
    <cofactor evidence="1">
        <name>Mg(2+)</name>
        <dbReference type="ChEBI" id="CHEBI:18420"/>
    </cofactor>
</comment>
<comment type="subunit">
    <text evidence="1">Homodimer.</text>
</comment>
<comment type="subcellular location">
    <subcellularLocation>
        <location evidence="1">Cytoplasm</location>
    </subcellularLocation>
</comment>
<comment type="similarity">
    <text evidence="1">Belongs to the fosfomycin resistance protein family. FosB subfamily.</text>
</comment>
<name>FOSB_SHOC1</name>
<evidence type="ECO:0000255" key="1">
    <source>
        <dbReference type="HAMAP-Rule" id="MF_01512"/>
    </source>
</evidence>
<evidence type="ECO:0000255" key="2">
    <source>
        <dbReference type="PROSITE-ProRule" id="PRU01163"/>
    </source>
</evidence>
<organism>
    <name type="scientific">Shouchella clausii (strain KSM-K16)</name>
    <name type="common">Alkalihalobacillus clausii</name>
    <dbReference type="NCBI Taxonomy" id="66692"/>
    <lineage>
        <taxon>Bacteria</taxon>
        <taxon>Bacillati</taxon>
        <taxon>Bacillota</taxon>
        <taxon>Bacilli</taxon>
        <taxon>Bacillales</taxon>
        <taxon>Bacillaceae</taxon>
        <taxon>Shouchella</taxon>
    </lineage>
</organism>
<protein>
    <recommendedName>
        <fullName evidence="1">Metallothiol transferase FosB</fullName>
        <ecNumber evidence="1">2.5.1.-</ecNumber>
    </recommendedName>
    <alternativeName>
        <fullName evidence="1">Fosfomycin resistance protein</fullName>
    </alternativeName>
</protein>
<feature type="chain" id="PRO_0000164031" description="Metallothiol transferase FosB">
    <location>
        <begin position="1"/>
        <end position="146"/>
    </location>
</feature>
<feature type="domain" description="VOC" evidence="2">
    <location>
        <begin position="4"/>
        <end position="120"/>
    </location>
</feature>
<feature type="active site" description="Proton donor/acceptor" evidence="2">
    <location>
        <position position="116"/>
    </location>
</feature>
<feature type="binding site" evidence="1">
    <location>
        <position position="7"/>
    </location>
    <ligand>
        <name>Mg(2+)</name>
        <dbReference type="ChEBI" id="CHEBI:18420"/>
    </ligand>
</feature>
<feature type="binding site" evidence="1">
    <location>
        <position position="66"/>
    </location>
    <ligand>
        <name>Mg(2+)</name>
        <dbReference type="ChEBI" id="CHEBI:18420"/>
    </ligand>
</feature>
<feature type="binding site" evidence="1">
    <location>
        <position position="116"/>
    </location>
    <ligand>
        <name>Mg(2+)</name>
        <dbReference type="ChEBI" id="CHEBI:18420"/>
    </ligand>
</feature>
<gene>
    <name evidence="1" type="primary">fosB</name>
    <name type="ordered locus">ABC2796</name>
</gene>